<protein>
    <recommendedName>
        <fullName evidence="1">Peptidase T</fullName>
        <ecNumber evidence="1">3.4.11.4</ecNumber>
    </recommendedName>
    <alternativeName>
        <fullName evidence="1">Aminotripeptidase</fullName>
        <shortName evidence="1">Tripeptidase</shortName>
    </alternativeName>
    <alternativeName>
        <fullName evidence="1">Tripeptide aminopeptidase</fullName>
    </alternativeName>
</protein>
<feature type="chain" id="PRO_1000017845" description="Peptidase T">
    <location>
        <begin position="1"/>
        <end position="411"/>
    </location>
</feature>
<feature type="active site" evidence="1">
    <location>
        <position position="81"/>
    </location>
</feature>
<feature type="active site" description="Proton acceptor" evidence="1">
    <location>
        <position position="176"/>
    </location>
</feature>
<feature type="binding site" evidence="1">
    <location>
        <position position="79"/>
    </location>
    <ligand>
        <name>Zn(2+)</name>
        <dbReference type="ChEBI" id="CHEBI:29105"/>
        <label>1</label>
    </ligand>
</feature>
<feature type="binding site" evidence="1">
    <location>
        <position position="142"/>
    </location>
    <ligand>
        <name>Zn(2+)</name>
        <dbReference type="ChEBI" id="CHEBI:29105"/>
        <label>1</label>
    </ligand>
</feature>
<feature type="binding site" evidence="1">
    <location>
        <position position="142"/>
    </location>
    <ligand>
        <name>Zn(2+)</name>
        <dbReference type="ChEBI" id="CHEBI:29105"/>
        <label>2</label>
    </ligand>
</feature>
<feature type="binding site" evidence="1">
    <location>
        <position position="177"/>
    </location>
    <ligand>
        <name>Zn(2+)</name>
        <dbReference type="ChEBI" id="CHEBI:29105"/>
        <label>2</label>
    </ligand>
</feature>
<feature type="binding site" evidence="1">
    <location>
        <position position="199"/>
    </location>
    <ligand>
        <name>Zn(2+)</name>
        <dbReference type="ChEBI" id="CHEBI:29105"/>
        <label>1</label>
    </ligand>
</feature>
<feature type="binding site" evidence="1">
    <location>
        <position position="381"/>
    </location>
    <ligand>
        <name>Zn(2+)</name>
        <dbReference type="ChEBI" id="CHEBI:29105"/>
        <label>2</label>
    </ligand>
</feature>
<keyword id="KW-0031">Aminopeptidase</keyword>
<keyword id="KW-0963">Cytoplasm</keyword>
<keyword id="KW-0378">Hydrolase</keyword>
<keyword id="KW-0479">Metal-binding</keyword>
<keyword id="KW-0482">Metalloprotease</keyword>
<keyword id="KW-0645">Protease</keyword>
<keyword id="KW-0862">Zinc</keyword>
<sequence>MKQELIERFTRYVKVDTQSDPESNTCPSTQGQWDLARMLVEELKAIGMEEVTVDENGYVMATLPANTDKNVPTIGFLAHLDTAPEFTGTNVNPQIIEQYDGGDIVLNEQQHIILSPKDFPELANYKGHTLITTDGTTLLGADDKAGIAEIMTAMNYLIQHPEIKHGKVRVAFTPDEEIGRGPHKFDVAQFGAQFAYTVDGGPLGELEYESFNAAEAKITIKGKNVHPGTAKGKMINSIKIALEFQQQLPANEAPEHTDGYEGFYHLLSFQGNVEETKLYYIIRDFDREQFEARKAKMKDIAAALAQKYGNDRISIEINDQYYNMREKIEPVHHIVDIAHEAMTNLGIEPKVKPIRGGTDGSQLSYMGLPTPNIFAGGENFHGRYEYISVDTMVKAAEVIVEIIKLFEQKTS</sequence>
<comment type="function">
    <text evidence="1">Cleaves the N-terminal amino acid of tripeptides.</text>
</comment>
<comment type="catalytic activity">
    <reaction evidence="1">
        <text>Release of the N-terminal residue from a tripeptide.</text>
        <dbReference type="EC" id="3.4.11.4"/>
    </reaction>
</comment>
<comment type="cofactor">
    <cofactor evidence="1">
        <name>Zn(2+)</name>
        <dbReference type="ChEBI" id="CHEBI:29105"/>
    </cofactor>
    <text evidence="1">Binds 2 Zn(2+) ions per subunit.</text>
</comment>
<comment type="subcellular location">
    <subcellularLocation>
        <location evidence="1">Cytoplasm</location>
    </subcellularLocation>
</comment>
<comment type="similarity">
    <text evidence="1">Belongs to the peptidase M20B family.</text>
</comment>
<accession>A4INW9</accession>
<evidence type="ECO:0000255" key="1">
    <source>
        <dbReference type="HAMAP-Rule" id="MF_00550"/>
    </source>
</evidence>
<organism>
    <name type="scientific">Geobacillus thermodenitrificans (strain NG80-2)</name>
    <dbReference type="NCBI Taxonomy" id="420246"/>
    <lineage>
        <taxon>Bacteria</taxon>
        <taxon>Bacillati</taxon>
        <taxon>Bacillota</taxon>
        <taxon>Bacilli</taxon>
        <taxon>Bacillales</taxon>
        <taxon>Anoxybacillaceae</taxon>
        <taxon>Geobacillus</taxon>
    </lineage>
</organism>
<reference key="1">
    <citation type="journal article" date="2007" name="Proc. Natl. Acad. Sci. U.S.A.">
        <title>Genome and proteome of long-chain alkane degrading Geobacillus thermodenitrificans NG80-2 isolated from a deep-subsurface oil reservoir.</title>
        <authorList>
            <person name="Feng L."/>
            <person name="Wang W."/>
            <person name="Cheng J."/>
            <person name="Ren Y."/>
            <person name="Zhao G."/>
            <person name="Gao C."/>
            <person name="Tang Y."/>
            <person name="Liu X."/>
            <person name="Han W."/>
            <person name="Peng X."/>
            <person name="Liu R."/>
            <person name="Wang L."/>
        </authorList>
    </citation>
    <scope>NUCLEOTIDE SEQUENCE [LARGE SCALE GENOMIC DNA]</scope>
    <source>
        <strain>NG80-2</strain>
    </source>
</reference>
<proteinExistence type="inferred from homology"/>
<dbReference type="EC" id="3.4.11.4" evidence="1"/>
<dbReference type="EMBL" id="CP000557">
    <property type="protein sequence ID" value="ABO67023.1"/>
    <property type="molecule type" value="Genomic_DNA"/>
</dbReference>
<dbReference type="RefSeq" id="WP_008880190.1">
    <property type="nucleotide sequence ID" value="NC_009328.1"/>
</dbReference>
<dbReference type="SMR" id="A4INW9"/>
<dbReference type="MEROPS" id="M20.003"/>
<dbReference type="KEGG" id="gtn:GTNG_1659"/>
<dbReference type="eggNOG" id="COG2195">
    <property type="taxonomic scope" value="Bacteria"/>
</dbReference>
<dbReference type="HOGENOM" id="CLU_053676_0_0_9"/>
<dbReference type="Proteomes" id="UP000001578">
    <property type="component" value="Chromosome"/>
</dbReference>
<dbReference type="GO" id="GO:0005829">
    <property type="term" value="C:cytosol"/>
    <property type="evidence" value="ECO:0007669"/>
    <property type="project" value="TreeGrafter"/>
</dbReference>
<dbReference type="GO" id="GO:0008237">
    <property type="term" value="F:metallopeptidase activity"/>
    <property type="evidence" value="ECO:0007669"/>
    <property type="project" value="UniProtKB-KW"/>
</dbReference>
<dbReference type="GO" id="GO:0045148">
    <property type="term" value="F:tripeptide aminopeptidase activity"/>
    <property type="evidence" value="ECO:0007669"/>
    <property type="project" value="UniProtKB-UniRule"/>
</dbReference>
<dbReference type="GO" id="GO:0008270">
    <property type="term" value="F:zinc ion binding"/>
    <property type="evidence" value="ECO:0007669"/>
    <property type="project" value="UniProtKB-UniRule"/>
</dbReference>
<dbReference type="GO" id="GO:0043171">
    <property type="term" value="P:peptide catabolic process"/>
    <property type="evidence" value="ECO:0007669"/>
    <property type="project" value="UniProtKB-UniRule"/>
</dbReference>
<dbReference type="GO" id="GO:0006508">
    <property type="term" value="P:proteolysis"/>
    <property type="evidence" value="ECO:0007669"/>
    <property type="project" value="UniProtKB-UniRule"/>
</dbReference>
<dbReference type="CDD" id="cd03892">
    <property type="entry name" value="M20_peptT"/>
    <property type="match status" value="1"/>
</dbReference>
<dbReference type="FunFam" id="3.30.70.360:FF:000002">
    <property type="entry name" value="Peptidase T"/>
    <property type="match status" value="1"/>
</dbReference>
<dbReference type="Gene3D" id="3.30.70.360">
    <property type="match status" value="1"/>
</dbReference>
<dbReference type="Gene3D" id="3.40.630.10">
    <property type="entry name" value="Zn peptidases"/>
    <property type="match status" value="1"/>
</dbReference>
<dbReference type="HAMAP" id="MF_00550">
    <property type="entry name" value="Aminopeptidase_M20"/>
    <property type="match status" value="1"/>
</dbReference>
<dbReference type="InterPro" id="IPR001261">
    <property type="entry name" value="ArgE/DapE_CS"/>
</dbReference>
<dbReference type="InterPro" id="IPR036264">
    <property type="entry name" value="Bact_exopeptidase_dim_dom"/>
</dbReference>
<dbReference type="InterPro" id="IPR002933">
    <property type="entry name" value="Peptidase_M20"/>
</dbReference>
<dbReference type="InterPro" id="IPR011650">
    <property type="entry name" value="Peptidase_M20_dimer"/>
</dbReference>
<dbReference type="InterPro" id="IPR010161">
    <property type="entry name" value="Peptidase_M20B"/>
</dbReference>
<dbReference type="NCBIfam" id="TIGR01882">
    <property type="entry name" value="peptidase-T"/>
    <property type="match status" value="1"/>
</dbReference>
<dbReference type="NCBIfam" id="NF003976">
    <property type="entry name" value="PRK05469.1"/>
    <property type="match status" value="1"/>
</dbReference>
<dbReference type="NCBIfam" id="NF009920">
    <property type="entry name" value="PRK13381.1"/>
    <property type="match status" value="1"/>
</dbReference>
<dbReference type="PANTHER" id="PTHR42994">
    <property type="entry name" value="PEPTIDASE T"/>
    <property type="match status" value="1"/>
</dbReference>
<dbReference type="PANTHER" id="PTHR42994:SF1">
    <property type="entry name" value="PEPTIDASE T"/>
    <property type="match status" value="1"/>
</dbReference>
<dbReference type="Pfam" id="PF07687">
    <property type="entry name" value="M20_dimer"/>
    <property type="match status" value="1"/>
</dbReference>
<dbReference type="Pfam" id="PF01546">
    <property type="entry name" value="Peptidase_M20"/>
    <property type="match status" value="1"/>
</dbReference>
<dbReference type="PIRSF" id="PIRSF037215">
    <property type="entry name" value="Peptidase_M20B"/>
    <property type="match status" value="1"/>
</dbReference>
<dbReference type="SUPFAM" id="SSF55031">
    <property type="entry name" value="Bacterial exopeptidase dimerisation domain"/>
    <property type="match status" value="1"/>
</dbReference>
<dbReference type="SUPFAM" id="SSF53187">
    <property type="entry name" value="Zn-dependent exopeptidases"/>
    <property type="match status" value="1"/>
</dbReference>
<dbReference type="PROSITE" id="PS00758">
    <property type="entry name" value="ARGE_DAPE_CPG2_1"/>
    <property type="match status" value="1"/>
</dbReference>
<dbReference type="PROSITE" id="PS00759">
    <property type="entry name" value="ARGE_DAPE_CPG2_2"/>
    <property type="match status" value="1"/>
</dbReference>
<name>PEPT_GEOTN</name>
<gene>
    <name evidence="1" type="primary">pepT</name>
    <name type="ordered locus">GTNG_1659</name>
</gene>